<dbReference type="EC" id="1.1.1.100"/>
<dbReference type="EMBL" id="BA000017">
    <property type="protein sequence ID" value="BAB57393.1"/>
    <property type="molecule type" value="Genomic_DNA"/>
</dbReference>
<dbReference type="PDB" id="3OSU">
    <property type="method" value="X-ray"/>
    <property type="resolution" value="1.90 A"/>
    <property type="chains" value="A/B=1-246"/>
</dbReference>
<dbReference type="PDBsum" id="3OSU"/>
<dbReference type="SMR" id="P0A0H9"/>
<dbReference type="KEGG" id="sav:SAV1231"/>
<dbReference type="HOGENOM" id="CLU_010194_1_3_9"/>
<dbReference type="PhylomeDB" id="P0A0H9"/>
<dbReference type="UniPathway" id="UPA00094"/>
<dbReference type="EvolutionaryTrace" id="P0A0H9"/>
<dbReference type="Proteomes" id="UP000002481">
    <property type="component" value="Chromosome"/>
</dbReference>
<dbReference type="GO" id="GO:0004316">
    <property type="term" value="F:3-oxoacyl-[acyl-carrier-protein] reductase (NADPH) activity"/>
    <property type="evidence" value="ECO:0007669"/>
    <property type="project" value="UniProtKB-EC"/>
</dbReference>
<dbReference type="GO" id="GO:0051287">
    <property type="term" value="F:NAD binding"/>
    <property type="evidence" value="ECO:0007669"/>
    <property type="project" value="InterPro"/>
</dbReference>
<dbReference type="GO" id="GO:0006633">
    <property type="term" value="P:fatty acid biosynthetic process"/>
    <property type="evidence" value="ECO:0007669"/>
    <property type="project" value="UniProtKB-UniPathway"/>
</dbReference>
<dbReference type="CDD" id="cd05333">
    <property type="entry name" value="BKR_SDR_c"/>
    <property type="match status" value="1"/>
</dbReference>
<dbReference type="FunFam" id="3.40.50.720:FF:000037">
    <property type="entry name" value="3-oxoacyl-[acyl-carrier-protein] reductase FabG"/>
    <property type="match status" value="1"/>
</dbReference>
<dbReference type="Gene3D" id="3.40.50.720">
    <property type="entry name" value="NAD(P)-binding Rossmann-like Domain"/>
    <property type="match status" value="1"/>
</dbReference>
<dbReference type="InterPro" id="IPR011284">
    <property type="entry name" value="3oxo_ACP_reduc"/>
</dbReference>
<dbReference type="InterPro" id="IPR036291">
    <property type="entry name" value="NAD(P)-bd_dom_sf"/>
</dbReference>
<dbReference type="InterPro" id="IPR020904">
    <property type="entry name" value="Sc_DH/Rdtase_CS"/>
</dbReference>
<dbReference type="InterPro" id="IPR050259">
    <property type="entry name" value="SDR"/>
</dbReference>
<dbReference type="InterPro" id="IPR002347">
    <property type="entry name" value="SDR_fam"/>
</dbReference>
<dbReference type="NCBIfam" id="TIGR01830">
    <property type="entry name" value="3oxo_ACP_reduc"/>
    <property type="match status" value="1"/>
</dbReference>
<dbReference type="NCBIfam" id="NF004197">
    <property type="entry name" value="PRK05653.1-1"/>
    <property type="match status" value="1"/>
</dbReference>
<dbReference type="NCBIfam" id="NF004198">
    <property type="entry name" value="PRK05653.1-3"/>
    <property type="match status" value="1"/>
</dbReference>
<dbReference type="NCBIfam" id="NF004199">
    <property type="entry name" value="PRK05653.1-4"/>
    <property type="match status" value="1"/>
</dbReference>
<dbReference type="NCBIfam" id="NF004200">
    <property type="entry name" value="PRK05653.1-5"/>
    <property type="match status" value="1"/>
</dbReference>
<dbReference type="NCBIfam" id="NF005559">
    <property type="entry name" value="PRK07231.1"/>
    <property type="match status" value="1"/>
</dbReference>
<dbReference type="NCBIfam" id="NF009466">
    <property type="entry name" value="PRK12826.1-2"/>
    <property type="match status" value="1"/>
</dbReference>
<dbReference type="PANTHER" id="PTHR42879">
    <property type="entry name" value="3-OXOACYL-(ACYL-CARRIER-PROTEIN) REDUCTASE"/>
    <property type="match status" value="1"/>
</dbReference>
<dbReference type="PANTHER" id="PTHR42879:SF2">
    <property type="entry name" value="3-OXOACYL-[ACYL-CARRIER-PROTEIN] REDUCTASE FABG"/>
    <property type="match status" value="1"/>
</dbReference>
<dbReference type="Pfam" id="PF13561">
    <property type="entry name" value="adh_short_C2"/>
    <property type="match status" value="1"/>
</dbReference>
<dbReference type="PRINTS" id="PR00081">
    <property type="entry name" value="GDHRDH"/>
</dbReference>
<dbReference type="PRINTS" id="PR00080">
    <property type="entry name" value="SDRFAMILY"/>
</dbReference>
<dbReference type="SMART" id="SM00822">
    <property type="entry name" value="PKS_KR"/>
    <property type="match status" value="1"/>
</dbReference>
<dbReference type="SUPFAM" id="SSF51735">
    <property type="entry name" value="NAD(P)-binding Rossmann-fold domains"/>
    <property type="match status" value="1"/>
</dbReference>
<dbReference type="PROSITE" id="PS00061">
    <property type="entry name" value="ADH_SHORT"/>
    <property type="match status" value="1"/>
</dbReference>
<accession>P0A0H9</accession>
<accession>Q99QK7</accession>
<feature type="chain" id="PRO_0000054684" description="3-oxoacyl-[acyl-carrier-protein] reductase FabG">
    <location>
        <begin position="1"/>
        <end position="246"/>
    </location>
</feature>
<feature type="active site" description="Proton acceptor" evidence="2">
    <location>
        <position position="154"/>
    </location>
</feature>
<feature type="binding site" evidence="1">
    <location>
        <begin position="11"/>
        <end position="14"/>
    </location>
    <ligand>
        <name>NADP(+)</name>
        <dbReference type="ChEBI" id="CHEBI:58349"/>
    </ligand>
</feature>
<feature type="binding site" evidence="1">
    <location>
        <begin position="62"/>
        <end position="63"/>
    </location>
    <ligand>
        <name>NADP(+)</name>
        <dbReference type="ChEBI" id="CHEBI:58349"/>
    </ligand>
</feature>
<feature type="binding site" evidence="1">
    <location>
        <position position="89"/>
    </location>
    <ligand>
        <name>NADP(+)</name>
        <dbReference type="ChEBI" id="CHEBI:58349"/>
    </ligand>
</feature>
<feature type="binding site" evidence="1">
    <location>
        <position position="141"/>
    </location>
    <ligand>
        <name>substrate</name>
    </ligand>
</feature>
<feature type="binding site" evidence="1">
    <location>
        <begin position="154"/>
        <end position="158"/>
    </location>
    <ligand>
        <name>NADP(+)</name>
        <dbReference type="ChEBI" id="CHEBI:58349"/>
    </ligand>
</feature>
<feature type="binding site" evidence="1">
    <location>
        <position position="187"/>
    </location>
    <ligand>
        <name>NADP(+)</name>
        <dbReference type="ChEBI" id="CHEBI:58349"/>
    </ligand>
</feature>
<feature type="strand" evidence="5">
    <location>
        <begin position="6"/>
        <end position="9"/>
    </location>
</feature>
<feature type="helix" evidence="5">
    <location>
        <begin position="15"/>
        <end position="26"/>
    </location>
</feature>
<feature type="strand" evidence="5">
    <location>
        <begin position="30"/>
        <end position="37"/>
    </location>
</feature>
<feature type="helix" evidence="5">
    <location>
        <begin position="39"/>
        <end position="51"/>
    </location>
</feature>
<feature type="strand" evidence="5">
    <location>
        <begin position="56"/>
        <end position="60"/>
    </location>
</feature>
<feature type="helix" evidence="5">
    <location>
        <begin position="66"/>
        <end position="80"/>
    </location>
</feature>
<feature type="strand" evidence="5">
    <location>
        <begin position="85"/>
        <end position="88"/>
    </location>
</feature>
<feature type="turn" evidence="5">
    <location>
        <begin position="98"/>
        <end position="100"/>
    </location>
</feature>
<feature type="helix" evidence="5">
    <location>
        <begin position="103"/>
        <end position="113"/>
    </location>
</feature>
<feature type="helix" evidence="5">
    <location>
        <begin position="115"/>
        <end position="131"/>
    </location>
</feature>
<feature type="strand" evidence="5">
    <location>
        <begin position="134"/>
        <end position="139"/>
    </location>
</feature>
<feature type="helix" evidence="5">
    <location>
        <begin position="142"/>
        <end position="146"/>
    </location>
</feature>
<feature type="helix" evidence="5">
    <location>
        <begin position="152"/>
        <end position="172"/>
    </location>
</feature>
<feature type="helix" evidence="5">
    <location>
        <begin position="173"/>
        <end position="175"/>
    </location>
</feature>
<feature type="strand" evidence="5">
    <location>
        <begin position="177"/>
        <end position="184"/>
    </location>
</feature>
<feature type="helix" evidence="5">
    <location>
        <begin position="188"/>
        <end position="190"/>
    </location>
</feature>
<feature type="helix" evidence="5">
    <location>
        <begin position="197"/>
        <end position="204"/>
    </location>
</feature>
<feature type="helix" evidence="5">
    <location>
        <begin position="215"/>
        <end position="225"/>
    </location>
</feature>
<feature type="helix" evidence="5">
    <location>
        <begin position="228"/>
        <end position="230"/>
    </location>
</feature>
<feature type="strand" evidence="5">
    <location>
        <begin position="237"/>
        <end position="241"/>
    </location>
</feature>
<name>FABG_STAAM</name>
<organism>
    <name type="scientific">Staphylococcus aureus (strain Mu50 / ATCC 700699)</name>
    <dbReference type="NCBI Taxonomy" id="158878"/>
    <lineage>
        <taxon>Bacteria</taxon>
        <taxon>Bacillati</taxon>
        <taxon>Bacillota</taxon>
        <taxon>Bacilli</taxon>
        <taxon>Bacillales</taxon>
        <taxon>Staphylococcaceae</taxon>
        <taxon>Staphylococcus</taxon>
    </lineage>
</organism>
<sequence>MKMTKSALVTGASRGIGRSIALQLAEEGYNVAVNYAGSKEKAEAVVEEIKAKGVDSFAIQANVADADEVKAMIKEVVSQFGSLDVLVNNAGITRDNLLMRMKEQEWDDVIDTNLKGVFNCIQKATPQMLRQRSGAIINLSSVVGAVGNPGQANYVATKAGVIGLTKSAARELASRGITVNAVAPGFIVSDMTDALSDELKEQMLTQIPLARFGQDTDIANTVAFLASDKAKYITGQTIHVNGGMYM</sequence>
<reference key="1">
    <citation type="journal article" date="2001" name="Lancet">
        <title>Whole genome sequencing of meticillin-resistant Staphylococcus aureus.</title>
        <authorList>
            <person name="Kuroda M."/>
            <person name="Ohta T."/>
            <person name="Uchiyama I."/>
            <person name="Baba T."/>
            <person name="Yuzawa H."/>
            <person name="Kobayashi I."/>
            <person name="Cui L."/>
            <person name="Oguchi A."/>
            <person name="Aoki K."/>
            <person name="Nagai Y."/>
            <person name="Lian J.-Q."/>
            <person name="Ito T."/>
            <person name="Kanamori M."/>
            <person name="Matsumaru H."/>
            <person name="Maruyama A."/>
            <person name="Murakami H."/>
            <person name="Hosoyama A."/>
            <person name="Mizutani-Ui Y."/>
            <person name="Takahashi N.K."/>
            <person name="Sawano T."/>
            <person name="Inoue R."/>
            <person name="Kaito C."/>
            <person name="Sekimizu K."/>
            <person name="Hirakawa H."/>
            <person name="Kuhara S."/>
            <person name="Goto S."/>
            <person name="Yabuzaki J."/>
            <person name="Kanehisa M."/>
            <person name="Yamashita A."/>
            <person name="Oshima K."/>
            <person name="Furuya K."/>
            <person name="Yoshino C."/>
            <person name="Shiba T."/>
            <person name="Hattori M."/>
            <person name="Ogasawara N."/>
            <person name="Hayashi H."/>
            <person name="Hiramatsu K."/>
        </authorList>
    </citation>
    <scope>NUCLEOTIDE SEQUENCE [LARGE SCALE GENOMIC DNA]</scope>
    <source>
        <strain>Mu50 / ATCC 700699</strain>
    </source>
</reference>
<reference key="2">
    <citation type="submission" date="2010-09" db="PDB data bank">
        <title>Crystal structure of the 3-oxoacyl-acyl carrier protein reductase, FabG, from Staphylococcus aureus.</title>
        <authorList>
            <person name="Anderson S.M."/>
            <person name="Wawrzak Z."/>
            <person name="Onopriyenko O."/>
            <person name="Edwards A."/>
            <person name="Anderson W.F."/>
            <person name="Savchenko A."/>
        </authorList>
    </citation>
    <scope>X-RAY CRYSTALLOGRAPHY (1.90 ANGSTROMS)</scope>
    <scope>SUBUNIT</scope>
</reference>
<evidence type="ECO:0000250" key="1"/>
<evidence type="ECO:0000255" key="2">
    <source>
        <dbReference type="PROSITE-ProRule" id="PRU10001"/>
    </source>
</evidence>
<evidence type="ECO:0000269" key="3">
    <source ref="2"/>
</evidence>
<evidence type="ECO:0000305" key="4"/>
<evidence type="ECO:0007829" key="5">
    <source>
        <dbReference type="PDB" id="3OSU"/>
    </source>
</evidence>
<gene>
    <name type="primary">fabG</name>
    <name type="ordered locus">SAV1231</name>
</gene>
<comment type="function">
    <text evidence="1">Catalyzes the NADPH-dependent reduction of beta-ketoacyl-ACP substrates to beta-hydroxyacyl-ACP products, the first reductive step in the elongation cycle of fatty acid biosynthesis.</text>
</comment>
<comment type="catalytic activity">
    <reaction>
        <text>a (3R)-hydroxyacyl-[ACP] + NADP(+) = a 3-oxoacyl-[ACP] + NADPH + H(+)</text>
        <dbReference type="Rhea" id="RHEA:17397"/>
        <dbReference type="Rhea" id="RHEA-COMP:9916"/>
        <dbReference type="Rhea" id="RHEA-COMP:9945"/>
        <dbReference type="ChEBI" id="CHEBI:15378"/>
        <dbReference type="ChEBI" id="CHEBI:57783"/>
        <dbReference type="ChEBI" id="CHEBI:58349"/>
        <dbReference type="ChEBI" id="CHEBI:78776"/>
        <dbReference type="ChEBI" id="CHEBI:78827"/>
        <dbReference type="EC" id="1.1.1.100"/>
    </reaction>
</comment>
<comment type="pathway">
    <text>Lipid metabolism; fatty acid biosynthesis.</text>
</comment>
<comment type="subunit">
    <text evidence="3">Homotetramer.</text>
</comment>
<comment type="similarity">
    <text evidence="4">Belongs to the short-chain dehydrogenases/reductases (SDR) family.</text>
</comment>
<keyword id="KW-0002">3D-structure</keyword>
<keyword id="KW-0275">Fatty acid biosynthesis</keyword>
<keyword id="KW-0276">Fatty acid metabolism</keyword>
<keyword id="KW-0444">Lipid biosynthesis</keyword>
<keyword id="KW-0443">Lipid metabolism</keyword>
<keyword id="KW-0521">NADP</keyword>
<keyword id="KW-0560">Oxidoreductase</keyword>
<protein>
    <recommendedName>
        <fullName>3-oxoacyl-[acyl-carrier-protein] reductase FabG</fullName>
        <ecNumber>1.1.1.100</ecNumber>
    </recommendedName>
    <alternativeName>
        <fullName>3-ketoacyl-acyl carrier protein reductase</fullName>
    </alternativeName>
    <alternativeName>
        <fullName>Beta-Ketoacyl-acyl carrier protein reductase</fullName>
    </alternativeName>
    <alternativeName>
        <fullName>Beta-ketoacyl-ACP reductase</fullName>
    </alternativeName>
</protein>
<proteinExistence type="evidence at protein level"/>